<reference key="1">
    <citation type="journal article" date="1993" name="Biochim. Biophys. Acta">
        <title>Purification and partial characterization of a mitogenic lectin from the latex of Euphorbia marginata.</title>
        <authorList>
            <person name="Stirpe F."/>
            <person name="Licastro F."/>
            <person name="Morini M.C."/>
            <person name="Parente A."/>
            <person name="Savino G."/>
            <person name="Abbondanza A."/>
            <person name="Bolognesi A."/>
            <person name="Falasca A.I."/>
            <person name="Rossi C.A."/>
        </authorList>
    </citation>
    <scope>PROTEIN SEQUENCE</scope>
    <source>
        <tissue>Latex</tissue>
    </source>
</reference>
<accession>P33889</accession>
<comment type="function">
    <text>Lectin that binds galactose, galactose-containing sugars and gentiobiose. It is strongly mitogenic for human T-lymphocytes and induces the release of interleukin-1 beta and tumor necrosis factor alpha from cultured mononuclear cells. It has a strong hemagglutininating activity.</text>
</comment>
<comment type="subunit">
    <text>Homodimer.</text>
</comment>
<comment type="developmental stage">
    <text>The production of this lecting varies with seasons being higher in late spring.</text>
</comment>
<comment type="PTM">
    <text>N-glycosylated.</text>
</comment>
<comment type="PTM">
    <text>An isoform with Ala-1 missing is found in 20% of the samples.</text>
</comment>
<name>AGI_EUPMA</name>
<sequence>AYPGSHISGPNGFXMDVK</sequence>
<organism>
    <name type="scientific">Euphorbia marginata</name>
    <name type="common">Snow-on-the-mountain</name>
    <name type="synonym">Euphorbia variegata</name>
    <dbReference type="NCBI Taxonomy" id="28955"/>
    <lineage>
        <taxon>Eukaryota</taxon>
        <taxon>Viridiplantae</taxon>
        <taxon>Streptophyta</taxon>
        <taxon>Embryophyta</taxon>
        <taxon>Tracheophyta</taxon>
        <taxon>Spermatophyta</taxon>
        <taxon>Magnoliopsida</taxon>
        <taxon>eudicotyledons</taxon>
        <taxon>Gunneridae</taxon>
        <taxon>Pentapetalae</taxon>
        <taxon>rosids</taxon>
        <taxon>fabids</taxon>
        <taxon>Malpighiales</taxon>
        <taxon>Euphorbiaceae</taxon>
        <taxon>Euphorbioideae</taxon>
        <taxon>Euphorbieae</taxon>
        <taxon>Euphorbia</taxon>
        <taxon>Euphorbia subgen. Chamaesyce</taxon>
        <taxon>Euphorbia sect. Alectoroctonum</taxon>
    </lineage>
</organism>
<proteinExistence type="evidence at protein level"/>
<keyword id="KW-0903">Direct protein sequencing</keyword>
<keyword id="KW-0325">Glycoprotein</keyword>
<keyword id="KW-0430">Lectin</keyword>
<feature type="chain" id="PRO_0000030752" description="Galactose-inhibitable lectin">
    <location>
        <begin position="1"/>
        <end position="18" status="greater than"/>
    </location>
</feature>
<feature type="chain" id="PRO_0000030753" description="Galactose-inhibitable lectin isoform Ala-1 del">
    <location>
        <begin position="2"/>
        <end position="18" status="greater than"/>
    </location>
</feature>
<feature type="non-terminal residue">
    <location>
        <position position="18"/>
    </location>
</feature>
<protein>
    <recommendedName>
        <fullName>Galactose-inhibitable lectin</fullName>
    </recommendedName>
    <component>
        <recommendedName>
            <fullName>Galactose-inhibitable lectin isoform Ala-1 del</fullName>
        </recommendedName>
    </component>
</protein>
<dbReference type="PIR" id="S36120">
    <property type="entry name" value="S36120"/>
</dbReference>
<dbReference type="GO" id="GO:0030246">
    <property type="term" value="F:carbohydrate binding"/>
    <property type="evidence" value="ECO:0007669"/>
    <property type="project" value="UniProtKB-KW"/>
</dbReference>